<gene>
    <name evidence="7" type="primary">mceA</name>
</gene>
<keyword id="KW-0002">3D-structure</keyword>
<keyword id="KW-0044">Antibiotic</keyword>
<keyword id="KW-0929">Antimicrobial</keyword>
<keyword id="KW-0078">Bacteriocin</keyword>
<keyword id="KW-0903">Direct protein sequencing</keyword>
<keyword id="KW-0407">Ion channel</keyword>
<keyword id="KW-0406">Ion transport</keyword>
<keyword id="KW-0732">Signal</keyword>
<keyword id="KW-0813">Transport</keyword>
<evidence type="ECO:0000256" key="1">
    <source>
        <dbReference type="SAM" id="MobiDB-lite"/>
    </source>
</evidence>
<evidence type="ECO:0000269" key="2">
    <source>
    </source>
</evidence>
<evidence type="ECO:0000269" key="3">
    <source>
    </source>
</evidence>
<evidence type="ECO:0000269" key="4">
    <source>
    </source>
</evidence>
<evidence type="ECO:0000269" key="5">
    <source>
    </source>
</evidence>
<evidence type="ECO:0000269" key="6">
    <source>
    </source>
</evidence>
<evidence type="ECO:0000303" key="7">
    <source>
    </source>
</evidence>
<evidence type="ECO:0000305" key="8"/>
<evidence type="ECO:0007829" key="9">
    <source>
        <dbReference type="PDB" id="7DYR"/>
    </source>
</evidence>
<protein>
    <recommendedName>
        <fullName>Microcin E492</fullName>
        <shortName>MccE492</shortName>
    </recommendedName>
</protein>
<dbReference type="EMBL" id="AF063590">
    <property type="protein sequence ID" value="AAD04332.2"/>
    <property type="molecule type" value="Genomic_DNA"/>
</dbReference>
<dbReference type="RefSeq" id="WP_071785591.1">
    <property type="nucleotide sequence ID" value="NZ_WYAM01000026.1"/>
</dbReference>
<dbReference type="PDB" id="7DYR">
    <property type="method" value="EM"/>
    <property type="resolution" value="2.28 A"/>
    <property type="chains" value="A/D/G=16-99"/>
</dbReference>
<dbReference type="PDBsum" id="7DYR"/>
<dbReference type="EMDB" id="EMD-30923"/>
<dbReference type="SMR" id="Q9Z4N4"/>
<dbReference type="TCDB" id="1.C.58.1.1">
    <property type="family name" value="the microcin e492/c24 (microcin e492) family"/>
</dbReference>
<dbReference type="GO" id="GO:0042742">
    <property type="term" value="P:defense response to bacterium"/>
    <property type="evidence" value="ECO:0007669"/>
    <property type="project" value="UniProtKB-KW"/>
</dbReference>
<dbReference type="GO" id="GO:0031640">
    <property type="term" value="P:killing of cells of another organism"/>
    <property type="evidence" value="ECO:0007669"/>
    <property type="project" value="UniProtKB-KW"/>
</dbReference>
<dbReference type="GO" id="GO:0034220">
    <property type="term" value="P:monoatomic ion transmembrane transport"/>
    <property type="evidence" value="ECO:0007669"/>
    <property type="project" value="UniProtKB-KW"/>
</dbReference>
<reference key="1">
    <citation type="journal article" date="1999" name="J. Bacteriol.">
        <title>Identification and properties of the genes encoding microcin E492 and its immunity protein.</title>
        <authorList>
            <person name="Lagos R."/>
            <person name="Villanueva J.E."/>
            <person name="Monasterio O."/>
        </authorList>
    </citation>
    <scope>NUCLEOTIDE SEQUENCE [GENOMIC DNA]</scope>
    <scope>PROTEIN SEQUENCE OF 18-26</scope>
    <source>
        <strain>RYC492</strain>
    </source>
</reference>
<reference key="2">
    <citation type="journal article" date="2002" name="Antimicrob. Agents Chemother.">
        <title>Microcin E492 is an unmodified peptide related in structure to colicin V.</title>
        <authorList>
            <person name="Pons A.-M."/>
            <person name="Zorn N."/>
            <person name="Vignon D."/>
            <person name="Delalande F."/>
            <person name="Van Dorsselaer A."/>
            <person name="Cottenceau G."/>
        </authorList>
    </citation>
    <scope>PROTEIN SEQUENCE OF 16-99</scope>
    <scope>MASS SPECTROMETRY</scope>
</reference>
<reference key="3">
    <citation type="journal article" date="2003" name="Mol. Microbiol.">
        <title>Microcin E492 antibacterial activity: evidence for a TonB-dependent inner membrane permeabilization on Escherichia coli.</title>
        <authorList>
            <person name="Destoumieux-Garzon D."/>
            <person name="Thomas X."/>
            <person name="Santamaria M."/>
            <person name="Goulard C."/>
            <person name="Barthelemy M."/>
            <person name="Boscher B."/>
            <person name="Bessin Y."/>
            <person name="Molle G."/>
            <person name="Pons A.-M."/>
            <person name="Letellier L."/>
            <person name="Peduzzi J."/>
            <person name="Rebuffat S."/>
        </authorList>
    </citation>
    <scope>PROTEIN SEQUENCE OF 16-20</scope>
    <scope>FUNCTION</scope>
    <scope>SUBUNIT</scope>
    <scope>MASS SPECTROMETRY</scope>
</reference>
<reference key="4">
    <citation type="journal article" date="2004" name="J. Biol. Chem.">
        <title>Siderophore peptide, a new type of post-translationally modified antibacterial peptide with potent activity.</title>
        <authorList>
            <person name="Thomas X."/>
            <person name="Destoumieux-Garzon D."/>
            <person name="Peduzzi J."/>
            <person name="Afonso C."/>
            <person name="Blond A."/>
            <person name="Birlirakis N."/>
            <person name="Goulard C."/>
            <person name="Dubost L."/>
            <person name="Thai R."/>
            <person name="Tabet J.-C."/>
            <person name="Rebuffat S."/>
        </authorList>
    </citation>
    <scope>PROTEIN SEQUENCE OF 89-99</scope>
    <scope>FUNCTION</scope>
    <scope>MASS SPECTROMETRY</scope>
    <scope>SIDEROPHORE BINDING SITE</scope>
    <source>
        <strain>RYC492</strain>
    </source>
</reference>
<reference key="5">
    <citation type="journal article" date="1993" name="FEBS Lett.">
        <title>Microcin E492 forms ion channels in phospholipid bilayer membrane.</title>
        <authorList>
            <person name="Lagos R."/>
            <person name="Wilkens M."/>
            <person name="Vergara C."/>
            <person name="Cecchi X."/>
            <person name="Monasterio O."/>
        </authorList>
    </citation>
    <scope>FUNCTION</scope>
</reference>
<sequence length="99" mass="9562">MREISQKDLNLAFGAGETDPNTQLLNDLGNNMAWGAALGAPGGLGSAALGAAGGALQTVGQGLIDHGPVNVPIPVLIGPSWNGSGSGYNSATSSSGSGS</sequence>
<name>MCEA_KLEPN</name>
<proteinExistence type="evidence at protein level"/>
<accession>Q9Z4N4</accession>
<accession>P82962</accession>
<feature type="signal peptide" evidence="2 3">
    <location>
        <begin position="1"/>
        <end position="15"/>
    </location>
</feature>
<feature type="chain" id="PRO_0000005677" description="Microcin E492">
    <location>
        <begin position="16"/>
        <end position="99"/>
    </location>
</feature>
<feature type="region of interest" description="Disordered" evidence="1">
    <location>
        <begin position="80"/>
        <end position="99"/>
    </location>
</feature>
<feature type="compositionally biased region" description="Low complexity" evidence="1">
    <location>
        <begin position="87"/>
        <end position="99"/>
    </location>
</feature>
<feature type="modified residue" description="Serine microcin E492 siderophore ester">
    <location>
        <position position="99"/>
    </location>
</feature>
<feature type="helix" evidence="9">
    <location>
        <begin position="20"/>
        <end position="38"/>
    </location>
</feature>
<feature type="turn" evidence="9">
    <location>
        <begin position="39"/>
        <end position="42"/>
    </location>
</feature>
<feature type="helix" evidence="9">
    <location>
        <begin position="44"/>
        <end position="66"/>
    </location>
</feature>
<feature type="strand" evidence="9">
    <location>
        <begin position="69"/>
        <end position="71"/>
    </location>
</feature>
<feature type="turn" evidence="9">
    <location>
        <begin position="80"/>
        <end position="83"/>
    </location>
</feature>
<feature type="turn" evidence="9">
    <location>
        <begin position="88"/>
        <end position="90"/>
    </location>
</feature>
<comment type="function">
    <text evidence="3 4 5 6">Channel-forming bacteriocin. Forms cation-selective channels. Active on enterobacteria, with highest activity against E.coli. Not active on other Gram-negative bacteria, Gram-positive bacteria or fungi. The unmodified protein is active against E.coli and S.enteritidis. When the siderophore ester is present at Ser-99, antibacterial activity against these species is increased and activity is also detected against E.cloacae and K.pneumoniae. Neutralized by its immunity protein MceB (PubMed:9864332).</text>
</comment>
<comment type="subunit">
    <text evidence="3">Multimer. Possibly forms a homodimer or a homotrimer.</text>
</comment>
<comment type="PTM">
    <text>The C-terminal Ser is modified by attachment to a siderophore similar to enterobactin, which can bind one atom of iron. The modification consists of an ester linkage of the serine carboxyl to O6 of a glucose which is linked by a C-glycosidic bond to the 5'-benzoyl of a linear triester of N-(2,3-dihydroxybenzoyl)serine. Presence of the siderophore ester increases the antibacterial activity of the protein.</text>
</comment>
<comment type="mass spectrometry" mass="7886.68" error="0.52" method="Electrospray" evidence="2"/>
<comment type="mass spectrometry" mass="7887.8" method="MALDI" evidence="2"/>
<comment type="mass spectrometry" mass="7885.32" method="MALDI" evidence="3"/>
<comment type="mass spectrometry" mass="7887.0" method="MALDI" evidence="4">
    <text>Ser-99 unmodified form.</text>
</comment>
<comment type="mass spectrometry" mass="8718.0" method="MALDI" evidence="4">
    <text>Ser-99 modified form.</text>
</comment>
<comment type="similarity">
    <text evidence="8">Belongs to the class IIa microcin family.</text>
</comment>
<organism>
    <name type="scientific">Klebsiella pneumoniae</name>
    <dbReference type="NCBI Taxonomy" id="573"/>
    <lineage>
        <taxon>Bacteria</taxon>
        <taxon>Pseudomonadati</taxon>
        <taxon>Pseudomonadota</taxon>
        <taxon>Gammaproteobacteria</taxon>
        <taxon>Enterobacterales</taxon>
        <taxon>Enterobacteriaceae</taxon>
        <taxon>Klebsiella/Raoultella group</taxon>
        <taxon>Klebsiella</taxon>
        <taxon>Klebsiella pneumoniae complex</taxon>
    </lineage>
</organism>